<name>ATC1_DROPS</name>
<keyword id="KW-0067">ATP-binding</keyword>
<keyword id="KW-0106">Calcium</keyword>
<keyword id="KW-0109">Calcium transport</keyword>
<keyword id="KW-0256">Endoplasmic reticulum</keyword>
<keyword id="KW-0406">Ion transport</keyword>
<keyword id="KW-0460">Magnesium</keyword>
<keyword id="KW-0472">Membrane</keyword>
<keyword id="KW-0479">Metal-binding</keyword>
<keyword id="KW-0547">Nucleotide-binding</keyword>
<keyword id="KW-0597">Phosphoprotein</keyword>
<keyword id="KW-1185">Reference proteome</keyword>
<keyword id="KW-0703">Sarcoplasmic reticulum</keyword>
<keyword id="KW-1278">Translocase</keyword>
<keyword id="KW-0812">Transmembrane</keyword>
<keyword id="KW-1133">Transmembrane helix</keyword>
<keyword id="KW-0813">Transport</keyword>
<protein>
    <recommendedName>
        <fullName>Calcium-transporting ATPase sarcoplasmic/endoplasmic reticulum type</fullName>
        <ecNumber>7.2.2.10</ecNumber>
    </recommendedName>
    <alternativeName>
        <fullName>Calcium pump</fullName>
    </alternativeName>
    <alternativeName>
        <fullName evidence="3">Sarcoplasmic/endoplasmic reticulum Ca(2+)-ATPase</fullName>
    </alternativeName>
</protein>
<evidence type="ECO:0000250" key="1"/>
<evidence type="ECO:0000250" key="2">
    <source>
        <dbReference type="UniProtKB" id="P04191"/>
    </source>
</evidence>
<evidence type="ECO:0000250" key="3">
    <source>
        <dbReference type="UniProtKB" id="P22700"/>
    </source>
</evidence>
<evidence type="ECO:0000305" key="4"/>
<reference key="1">
    <citation type="journal article" date="2005" name="Genome Res.">
        <title>Comparative genome sequencing of Drosophila pseudoobscura: chromosomal, gene, and cis-element evolution.</title>
        <authorList>
            <person name="Richards S."/>
            <person name="Liu Y."/>
            <person name="Bettencourt B.R."/>
            <person name="Hradecky P."/>
            <person name="Letovsky S."/>
            <person name="Nielsen R."/>
            <person name="Thornton K."/>
            <person name="Hubisz M.J."/>
            <person name="Chen R."/>
            <person name="Meisel R.P."/>
            <person name="Couronne O."/>
            <person name="Hua S."/>
            <person name="Smith M.A."/>
            <person name="Zhang P."/>
            <person name="Liu J."/>
            <person name="Bussemaker H.J."/>
            <person name="van Batenburg M.F."/>
            <person name="Howells S.L."/>
            <person name="Scherer S.E."/>
            <person name="Sodergren E."/>
            <person name="Matthews B.B."/>
            <person name="Crosby M.A."/>
            <person name="Schroeder A.J."/>
            <person name="Ortiz-Barrientos D."/>
            <person name="Rives C.M."/>
            <person name="Metzker M.L."/>
            <person name="Muzny D.M."/>
            <person name="Scott G."/>
            <person name="Steffen D."/>
            <person name="Wheeler D.A."/>
            <person name="Worley K.C."/>
            <person name="Havlak P."/>
            <person name="Durbin K.J."/>
            <person name="Egan A."/>
            <person name="Gill R."/>
            <person name="Hume J."/>
            <person name="Morgan M.B."/>
            <person name="Miner G."/>
            <person name="Hamilton C."/>
            <person name="Huang Y."/>
            <person name="Waldron L."/>
            <person name="Verduzco D."/>
            <person name="Clerc-Blankenburg K.P."/>
            <person name="Dubchak I."/>
            <person name="Noor M.A.F."/>
            <person name="Anderson W."/>
            <person name="White K.P."/>
            <person name="Clark A.G."/>
            <person name="Schaeffer S.W."/>
            <person name="Gelbart W.M."/>
            <person name="Weinstock G.M."/>
            <person name="Gibbs R.A."/>
        </authorList>
    </citation>
    <scope>NUCLEOTIDE SEQUENCE [LARGE SCALE GENOMIC DNA]</scope>
    <source>
        <strain>MV2-25 / Tucson 14011-0121.94</strain>
    </source>
</reference>
<dbReference type="EC" id="7.2.2.10"/>
<dbReference type="EMBL" id="CM000071">
    <property type="protein sequence ID" value="EAL24811.2"/>
    <property type="molecule type" value="Genomic_DNA"/>
</dbReference>
<dbReference type="RefSeq" id="XP_001360237.2">
    <property type="nucleotide sequence ID" value="XM_001360200.3"/>
</dbReference>
<dbReference type="SMR" id="Q292Q0"/>
<dbReference type="FunCoup" id="Q292Q0">
    <property type="interactions" value="1044"/>
</dbReference>
<dbReference type="STRING" id="46245.Q292Q0"/>
<dbReference type="EnsemblMetazoa" id="FBtr0278646">
    <property type="protein sequence ID" value="FBpp0277084"/>
    <property type="gene ID" value="FBgn0077654"/>
</dbReference>
<dbReference type="GeneID" id="4803524"/>
<dbReference type="KEGG" id="dpo:4803524"/>
<dbReference type="CTD" id="49297"/>
<dbReference type="eggNOG" id="KOG0202">
    <property type="taxonomic scope" value="Eukaryota"/>
</dbReference>
<dbReference type="HOGENOM" id="CLU_002360_3_2_1"/>
<dbReference type="InParanoid" id="Q292Q0"/>
<dbReference type="OMA" id="PLWNNMM"/>
<dbReference type="Proteomes" id="UP000001819">
    <property type="component" value="Chromosome 3"/>
</dbReference>
<dbReference type="Bgee" id="FBgn0077654">
    <property type="expression patterns" value="Expressed in adult organism and 3 other cell types or tissues"/>
</dbReference>
<dbReference type="ExpressionAtlas" id="Q292Q0">
    <property type="expression patterns" value="baseline"/>
</dbReference>
<dbReference type="GO" id="GO:0005783">
    <property type="term" value="C:endoplasmic reticulum"/>
    <property type="evidence" value="ECO:0000250"/>
    <property type="project" value="UniProtKB"/>
</dbReference>
<dbReference type="GO" id="GO:0016529">
    <property type="term" value="C:sarcoplasmic reticulum"/>
    <property type="evidence" value="ECO:0000250"/>
    <property type="project" value="UniProtKB"/>
</dbReference>
<dbReference type="GO" id="GO:0033017">
    <property type="term" value="C:sarcoplasmic reticulum membrane"/>
    <property type="evidence" value="ECO:0007669"/>
    <property type="project" value="UniProtKB-SubCell"/>
</dbReference>
<dbReference type="GO" id="GO:0005524">
    <property type="term" value="F:ATP binding"/>
    <property type="evidence" value="ECO:0007669"/>
    <property type="project" value="UniProtKB-KW"/>
</dbReference>
<dbReference type="GO" id="GO:0016887">
    <property type="term" value="F:ATP hydrolysis activity"/>
    <property type="evidence" value="ECO:0007669"/>
    <property type="project" value="InterPro"/>
</dbReference>
<dbReference type="GO" id="GO:0046872">
    <property type="term" value="F:metal ion binding"/>
    <property type="evidence" value="ECO:0007669"/>
    <property type="project" value="UniProtKB-KW"/>
</dbReference>
<dbReference type="GO" id="GO:0005388">
    <property type="term" value="F:P-type calcium transporter activity"/>
    <property type="evidence" value="ECO:0007669"/>
    <property type="project" value="UniProtKB-EC"/>
</dbReference>
<dbReference type="CDD" id="cd02083">
    <property type="entry name" value="P-type_ATPase_SERCA"/>
    <property type="match status" value="1"/>
</dbReference>
<dbReference type="FunFam" id="2.70.150.10:FF:000143">
    <property type="entry name" value="Calcium-transporting ATPase"/>
    <property type="match status" value="1"/>
</dbReference>
<dbReference type="FunFam" id="3.40.1110.10:FF:000003">
    <property type="entry name" value="Calcium-transporting ATPase"/>
    <property type="match status" value="1"/>
</dbReference>
<dbReference type="FunFam" id="3.40.50.1000:FF:000005">
    <property type="entry name" value="Calcium-transporting ATPase 1"/>
    <property type="match status" value="1"/>
</dbReference>
<dbReference type="FunFam" id="1.20.1110.10:FF:000065">
    <property type="entry name" value="Sarcoplasmic/endoplasmic reticulum calcium ATPase 1"/>
    <property type="match status" value="3"/>
</dbReference>
<dbReference type="Gene3D" id="3.40.1110.10">
    <property type="entry name" value="Calcium-transporting ATPase, cytoplasmic domain N"/>
    <property type="match status" value="1"/>
</dbReference>
<dbReference type="Gene3D" id="2.70.150.10">
    <property type="entry name" value="Calcium-transporting ATPase, cytoplasmic transduction domain A"/>
    <property type="match status" value="1"/>
</dbReference>
<dbReference type="Gene3D" id="1.20.1110.10">
    <property type="entry name" value="Calcium-transporting ATPase, transmembrane domain"/>
    <property type="match status" value="1"/>
</dbReference>
<dbReference type="Gene3D" id="3.40.50.1000">
    <property type="entry name" value="HAD superfamily/HAD-like"/>
    <property type="match status" value="1"/>
</dbReference>
<dbReference type="InterPro" id="IPR006068">
    <property type="entry name" value="ATPase_P-typ_cation-transptr_C"/>
</dbReference>
<dbReference type="InterPro" id="IPR004014">
    <property type="entry name" value="ATPase_P-typ_cation-transptr_N"/>
</dbReference>
<dbReference type="InterPro" id="IPR023299">
    <property type="entry name" value="ATPase_P-typ_cyto_dom_N"/>
</dbReference>
<dbReference type="InterPro" id="IPR018303">
    <property type="entry name" value="ATPase_P-typ_P_site"/>
</dbReference>
<dbReference type="InterPro" id="IPR023298">
    <property type="entry name" value="ATPase_P-typ_TM_dom_sf"/>
</dbReference>
<dbReference type="InterPro" id="IPR008250">
    <property type="entry name" value="ATPase_P-typ_transduc_dom_A_sf"/>
</dbReference>
<dbReference type="InterPro" id="IPR036412">
    <property type="entry name" value="HAD-like_sf"/>
</dbReference>
<dbReference type="InterPro" id="IPR023214">
    <property type="entry name" value="HAD_sf"/>
</dbReference>
<dbReference type="InterPro" id="IPR005782">
    <property type="entry name" value="P-type_ATPase_IIA"/>
</dbReference>
<dbReference type="InterPro" id="IPR001757">
    <property type="entry name" value="P_typ_ATPase"/>
</dbReference>
<dbReference type="InterPro" id="IPR044492">
    <property type="entry name" value="P_typ_ATPase_HD_dom"/>
</dbReference>
<dbReference type="NCBIfam" id="TIGR01116">
    <property type="entry name" value="ATPase-IIA1_Ca"/>
    <property type="match status" value="1"/>
</dbReference>
<dbReference type="NCBIfam" id="TIGR01494">
    <property type="entry name" value="ATPase_P-type"/>
    <property type="match status" value="3"/>
</dbReference>
<dbReference type="PANTHER" id="PTHR42861">
    <property type="entry name" value="CALCIUM-TRANSPORTING ATPASE"/>
    <property type="match status" value="1"/>
</dbReference>
<dbReference type="Pfam" id="PF13246">
    <property type="entry name" value="Cation_ATPase"/>
    <property type="match status" value="1"/>
</dbReference>
<dbReference type="Pfam" id="PF00689">
    <property type="entry name" value="Cation_ATPase_C"/>
    <property type="match status" value="1"/>
</dbReference>
<dbReference type="Pfam" id="PF00690">
    <property type="entry name" value="Cation_ATPase_N"/>
    <property type="match status" value="1"/>
</dbReference>
<dbReference type="Pfam" id="PF00122">
    <property type="entry name" value="E1-E2_ATPase"/>
    <property type="match status" value="1"/>
</dbReference>
<dbReference type="Pfam" id="PF00702">
    <property type="entry name" value="Hydrolase"/>
    <property type="match status" value="1"/>
</dbReference>
<dbReference type="PRINTS" id="PR00119">
    <property type="entry name" value="CATATPASE"/>
</dbReference>
<dbReference type="SFLD" id="SFLDG00002">
    <property type="entry name" value="C1.7:_P-type_atpase_like"/>
    <property type="match status" value="1"/>
</dbReference>
<dbReference type="SFLD" id="SFLDF00027">
    <property type="entry name" value="p-type_atpase"/>
    <property type="match status" value="1"/>
</dbReference>
<dbReference type="SMART" id="SM00831">
    <property type="entry name" value="Cation_ATPase_N"/>
    <property type="match status" value="1"/>
</dbReference>
<dbReference type="SUPFAM" id="SSF81653">
    <property type="entry name" value="Calcium ATPase, transduction domain A"/>
    <property type="match status" value="1"/>
</dbReference>
<dbReference type="SUPFAM" id="SSF81665">
    <property type="entry name" value="Calcium ATPase, transmembrane domain M"/>
    <property type="match status" value="1"/>
</dbReference>
<dbReference type="SUPFAM" id="SSF56784">
    <property type="entry name" value="HAD-like"/>
    <property type="match status" value="1"/>
</dbReference>
<dbReference type="SUPFAM" id="SSF81660">
    <property type="entry name" value="Metal cation-transporting ATPase, ATP-binding domain N"/>
    <property type="match status" value="1"/>
</dbReference>
<dbReference type="PROSITE" id="PS00154">
    <property type="entry name" value="ATPASE_E1_E2"/>
    <property type="match status" value="1"/>
</dbReference>
<accession>Q292Q0</accession>
<feature type="chain" id="PRO_0000233306" description="Calcium-transporting ATPase sarcoplasmic/endoplasmic reticulum type">
    <location>
        <begin position="1"/>
        <end position="1002"/>
    </location>
</feature>
<feature type="topological domain" description="Cytoplasmic" evidence="2">
    <location>
        <begin position="1"/>
        <end position="48"/>
    </location>
</feature>
<feature type="transmembrane region" description="Helical; Name=1" evidence="1">
    <location>
        <begin position="49"/>
        <end position="69"/>
    </location>
</feature>
<feature type="topological domain" description="Lumenal" evidence="2">
    <location>
        <begin position="70"/>
        <end position="89"/>
    </location>
</feature>
<feature type="transmembrane region" description="Helical; Name=2" evidence="1">
    <location>
        <begin position="90"/>
        <end position="110"/>
    </location>
</feature>
<feature type="topological domain" description="Cytoplasmic" evidence="2">
    <location>
        <begin position="111"/>
        <end position="253"/>
    </location>
</feature>
<feature type="transmembrane region" description="Helical; Name=3" evidence="1">
    <location>
        <begin position="254"/>
        <end position="273"/>
    </location>
</feature>
<feature type="topological domain" description="Lumenal" evidence="2">
    <location>
        <begin position="274"/>
        <end position="295"/>
    </location>
</feature>
<feature type="transmembrane region" description="Helical; Name=4" evidence="1">
    <location>
        <begin position="296"/>
        <end position="313"/>
    </location>
</feature>
<feature type="topological domain" description="Cytoplasmic" evidence="2">
    <location>
        <begin position="314"/>
        <end position="757"/>
    </location>
</feature>
<feature type="transmembrane region" description="Helical; Name=5" evidence="1">
    <location>
        <begin position="758"/>
        <end position="777"/>
    </location>
</feature>
<feature type="topological domain" description="Lumenal" evidence="2">
    <location>
        <begin position="778"/>
        <end position="787"/>
    </location>
</feature>
<feature type="transmembrane region" description="Helical; Name=6" evidence="1">
    <location>
        <begin position="788"/>
        <end position="808"/>
    </location>
</feature>
<feature type="topological domain" description="Cytoplasmic" evidence="2">
    <location>
        <begin position="809"/>
        <end position="828"/>
    </location>
</feature>
<feature type="transmembrane region" description="Helical; Name=7" evidence="1">
    <location>
        <begin position="829"/>
        <end position="851"/>
    </location>
</feature>
<feature type="topological domain" description="Lumenal" evidence="2">
    <location>
        <begin position="852"/>
        <end position="897"/>
    </location>
</feature>
<feature type="transmembrane region" description="Helical; Name=8" evidence="1">
    <location>
        <begin position="898"/>
        <end position="917"/>
    </location>
</feature>
<feature type="topological domain" description="Cytoplasmic" evidence="2">
    <location>
        <begin position="918"/>
        <end position="930"/>
    </location>
</feature>
<feature type="transmembrane region" description="Helical; Name=9" evidence="1">
    <location>
        <begin position="931"/>
        <end position="949"/>
    </location>
</feature>
<feature type="topological domain" description="Lumenal" evidence="2">
    <location>
        <begin position="950"/>
        <end position="964"/>
    </location>
</feature>
<feature type="transmembrane region" description="Helical; Name=10" evidence="1">
    <location>
        <begin position="965"/>
        <end position="985"/>
    </location>
</feature>
<feature type="topological domain" description="Cytoplasmic" evidence="1">
    <location>
        <begin position="986"/>
        <end position="1002"/>
    </location>
</feature>
<feature type="active site" description="4-aspartylphosphate intermediate" evidence="2">
    <location>
        <position position="351"/>
    </location>
</feature>
<feature type="binding site" evidence="1">
    <location>
        <position position="304"/>
    </location>
    <ligand>
        <name>Ca(2+)</name>
        <dbReference type="ChEBI" id="CHEBI:29108"/>
        <label>2</label>
    </ligand>
</feature>
<feature type="binding site" evidence="1">
    <location>
        <position position="305"/>
    </location>
    <ligand>
        <name>Ca(2+)</name>
        <dbReference type="ChEBI" id="CHEBI:29108"/>
        <label>2</label>
    </ligand>
</feature>
<feature type="binding site" evidence="1">
    <location>
        <position position="307"/>
    </location>
    <ligand>
        <name>Ca(2+)</name>
        <dbReference type="ChEBI" id="CHEBI:29108"/>
        <label>2</label>
    </ligand>
</feature>
<feature type="binding site" evidence="2">
    <location>
        <position position="309"/>
    </location>
    <ligand>
        <name>Ca(2+)</name>
        <dbReference type="ChEBI" id="CHEBI:29108"/>
        <label>2</label>
    </ligand>
</feature>
<feature type="binding site" evidence="2">
    <location>
        <position position="703"/>
    </location>
    <ligand>
        <name>Mg(2+)</name>
        <dbReference type="ChEBI" id="CHEBI:18420"/>
    </ligand>
</feature>
<feature type="binding site" evidence="2">
    <location>
        <position position="707"/>
    </location>
    <ligand>
        <name>Mg(2+)</name>
        <dbReference type="ChEBI" id="CHEBI:18420"/>
    </ligand>
</feature>
<feature type="binding site" evidence="2">
    <location>
        <position position="768"/>
    </location>
    <ligand>
        <name>Ca(2+)</name>
        <dbReference type="ChEBI" id="CHEBI:29108"/>
        <label>1</label>
    </ligand>
</feature>
<feature type="binding site" evidence="2">
    <location>
        <position position="771"/>
    </location>
    <ligand>
        <name>Ca(2+)</name>
        <dbReference type="ChEBI" id="CHEBI:29108"/>
        <label>1</label>
    </ligand>
</feature>
<feature type="binding site" evidence="2">
    <location>
        <position position="796"/>
    </location>
    <ligand>
        <name>Ca(2+)</name>
        <dbReference type="ChEBI" id="CHEBI:29108"/>
        <label>2</label>
    </ligand>
</feature>
<feature type="binding site" evidence="2">
    <location>
        <position position="799"/>
    </location>
    <ligand>
        <name>Ca(2+)</name>
        <dbReference type="ChEBI" id="CHEBI:29108"/>
        <label>1</label>
    </ligand>
</feature>
<feature type="binding site" evidence="2">
    <location>
        <position position="800"/>
    </location>
    <ligand>
        <name>Ca(2+)</name>
        <dbReference type="ChEBI" id="CHEBI:29108"/>
        <label>1</label>
    </ligand>
</feature>
<feature type="binding site" evidence="2">
    <location>
        <position position="800"/>
    </location>
    <ligand>
        <name>Ca(2+)</name>
        <dbReference type="ChEBI" id="CHEBI:29108"/>
        <label>2</label>
    </ligand>
</feature>
<feature type="binding site" evidence="2">
    <location>
        <position position="908"/>
    </location>
    <ligand>
        <name>Ca(2+)</name>
        <dbReference type="ChEBI" id="CHEBI:29108"/>
        <label>1</label>
    </ligand>
</feature>
<proteinExistence type="inferred from homology"/>
<comment type="function">
    <text evidence="4">This magnesium-dependent enzyme catalyzes the hydrolysis of ATP coupled with the transport of calcium.</text>
</comment>
<comment type="catalytic activity">
    <reaction>
        <text>Ca(2+)(in) + ATP + H2O = Ca(2+)(out) + ADP + phosphate + H(+)</text>
        <dbReference type="Rhea" id="RHEA:18105"/>
        <dbReference type="ChEBI" id="CHEBI:15377"/>
        <dbReference type="ChEBI" id="CHEBI:15378"/>
        <dbReference type="ChEBI" id="CHEBI:29108"/>
        <dbReference type="ChEBI" id="CHEBI:30616"/>
        <dbReference type="ChEBI" id="CHEBI:43474"/>
        <dbReference type="ChEBI" id="CHEBI:456216"/>
        <dbReference type="EC" id="7.2.2.10"/>
    </reaction>
</comment>
<comment type="subcellular location">
    <subcellularLocation>
        <location>Endoplasmic reticulum membrane</location>
        <topology>Multi-pass membrane protein</topology>
    </subcellularLocation>
    <subcellularLocation>
        <location evidence="1">Sarcoplasmic reticulum membrane</location>
        <topology evidence="1">Multi-pass membrane protein</topology>
    </subcellularLocation>
</comment>
<comment type="similarity">
    <text evidence="4">Belongs to the cation transport ATPase (P-type) (TC 3.A.3) family.</text>
</comment>
<organism>
    <name type="scientific">Drosophila pseudoobscura pseudoobscura</name>
    <name type="common">Fruit fly</name>
    <dbReference type="NCBI Taxonomy" id="46245"/>
    <lineage>
        <taxon>Eukaryota</taxon>
        <taxon>Metazoa</taxon>
        <taxon>Ecdysozoa</taxon>
        <taxon>Arthropoda</taxon>
        <taxon>Hexapoda</taxon>
        <taxon>Insecta</taxon>
        <taxon>Pterygota</taxon>
        <taxon>Neoptera</taxon>
        <taxon>Endopterygota</taxon>
        <taxon>Diptera</taxon>
        <taxon>Brachycera</taxon>
        <taxon>Muscomorpha</taxon>
        <taxon>Ephydroidea</taxon>
        <taxon>Drosophilidae</taxon>
        <taxon>Drosophila</taxon>
        <taxon>Sophophora</taxon>
    </lineage>
</organism>
<gene>
    <name evidence="3" type="primary">SERCA</name>
    <name evidence="3" type="synonym">Ca-P60A</name>
    <name type="ORF">GA17643</name>
</gene>
<sequence>MEDGHSKTVEQSLNFFGTDGERGLTLDQIKTNQAKYGPNELPTEEGKSIWQLVLEQFDDLLVKILLLAAIISFVLALFEEHEETFTAFVEPLVILLILIANAVVGVWQERNAESAIEALKEYEPEMGKVIRQDKSGIQKVRAKEIVPGDLVEVSVGDKIPADIRLTHIYSTTIRIDQSILTGESVSVIKHTDAIPDPRAVNQDKKNILFSGTNVAAGKARGVVIGTGLSTAIGKIRTEMSETEEIKTPLQQKLDEFGEQLSKVISVICVAVWAINIGHFNDPAHGGSWIKGAIYYFKIAVALAVAAIPEGLPAVITTCLALGTRRMAKKNAIVRSLPSVETLGCTSVICSDKTGTLTTNQMSVSRMLIFEKVEGNDSSFLEFELTGSTYEPIGELFLGGQRVKASDYEALQELATVCIMCNDSAIDYNEFKAAFEKVGEATETALIVLAEKLNAFSVNKSGLDRRSNAIAARGEIETKWKKEFTLEFSRDRKSMSSYCTPLKASRLGTGPKLFVKGAPEGVLDRCTHARVGTSKVPLTSALKAKILALTGQYGTGRDTLRCLALAVADSPIRPEDMDLGDSTKFYQYEVNLTFVGVVGMLDPPRKEVFDAIVRCRAAGIRVIVITGDNKATAEAICRRIGVFTEEEDTTGKSYSGREFDDLSIAEQKAAVARSRLFSRVEPQHKSKIVEYLQGMNEISAMTGDGVNDAPALKKAEIGIAMGSGTAVAKSAAEMVLADDNFSSIVSAVEEGRAIYNNMKQFIRYLISSNIGEVVSIFLTAALGLPEALIPVQLLWVNLVTDGLPATALGFNPPDLDIMDKPPRKADEGLISGWLFFRYMAIGFYVGAATVGAAAWWFIASSEGPGLTYWQLTHHLSCLGGGDEFKGVDCKIFSDPKAMTMALSVLVTIEMLNAMNSLSENQSLISMPPWCNLWLIGSMALSFTLHFVILYVDVLSTVFQVTPLSAEEWITVMKFSIPVVLLDETLKFVARKIADVPDAVVDKW</sequence>